<sequence>MMAAEATAALIDRLPKVRGELVADAPLAPLTWFRAGGNAEVLFRPADADDLAAFLAGTPADVPVTIIGVGSNLLVREGGVPGVVIRLGRGFMNIEIEGTCVRAGTAALDVAVSRAAQEAGLAGLEFYRGIPGSIGGALRMNGGAYGRETKDVLVEAVAIDRAGKRHVLTNADMHYTYRHCGAPDDLIFVEALFQGTPGNAEDILRRMNEITSSREATQPIRTRTGGSTFKNPEGHKSWQLIDAAGCRGLRKGGAQVSELHCNFLINTGDATASDIEDLGEEVRARVKETSGVTLEWEIRRIGIRKERGGA</sequence>
<dbReference type="EC" id="1.3.1.98" evidence="1"/>
<dbReference type="EMBL" id="CP000774">
    <property type="protein sequence ID" value="ABS64032.1"/>
    <property type="molecule type" value="Genomic_DNA"/>
</dbReference>
<dbReference type="RefSeq" id="WP_012111341.1">
    <property type="nucleotide sequence ID" value="NC_009719.1"/>
</dbReference>
<dbReference type="SMR" id="A7HVU9"/>
<dbReference type="STRING" id="402881.Plav_2423"/>
<dbReference type="KEGG" id="pla:Plav_2423"/>
<dbReference type="eggNOG" id="COG0812">
    <property type="taxonomic scope" value="Bacteria"/>
</dbReference>
<dbReference type="HOGENOM" id="CLU_035304_1_0_5"/>
<dbReference type="OrthoDB" id="9804753at2"/>
<dbReference type="UniPathway" id="UPA00219"/>
<dbReference type="Proteomes" id="UP000006377">
    <property type="component" value="Chromosome"/>
</dbReference>
<dbReference type="GO" id="GO:0005829">
    <property type="term" value="C:cytosol"/>
    <property type="evidence" value="ECO:0007669"/>
    <property type="project" value="TreeGrafter"/>
</dbReference>
<dbReference type="GO" id="GO:0071949">
    <property type="term" value="F:FAD binding"/>
    <property type="evidence" value="ECO:0007669"/>
    <property type="project" value="InterPro"/>
</dbReference>
<dbReference type="GO" id="GO:0008762">
    <property type="term" value="F:UDP-N-acetylmuramate dehydrogenase activity"/>
    <property type="evidence" value="ECO:0007669"/>
    <property type="project" value="UniProtKB-UniRule"/>
</dbReference>
<dbReference type="GO" id="GO:0051301">
    <property type="term" value="P:cell division"/>
    <property type="evidence" value="ECO:0007669"/>
    <property type="project" value="UniProtKB-KW"/>
</dbReference>
<dbReference type="GO" id="GO:0071555">
    <property type="term" value="P:cell wall organization"/>
    <property type="evidence" value="ECO:0007669"/>
    <property type="project" value="UniProtKB-KW"/>
</dbReference>
<dbReference type="GO" id="GO:0009252">
    <property type="term" value="P:peptidoglycan biosynthetic process"/>
    <property type="evidence" value="ECO:0007669"/>
    <property type="project" value="UniProtKB-UniRule"/>
</dbReference>
<dbReference type="GO" id="GO:0008360">
    <property type="term" value="P:regulation of cell shape"/>
    <property type="evidence" value="ECO:0007669"/>
    <property type="project" value="UniProtKB-KW"/>
</dbReference>
<dbReference type="Gene3D" id="3.30.465.10">
    <property type="match status" value="1"/>
</dbReference>
<dbReference type="Gene3D" id="3.90.78.10">
    <property type="entry name" value="UDP-N-acetylenolpyruvoylglucosamine reductase, C-terminal domain"/>
    <property type="match status" value="1"/>
</dbReference>
<dbReference type="Gene3D" id="3.30.43.10">
    <property type="entry name" value="Uridine Diphospho-n-acetylenolpyruvylglucosamine Reductase, domain 2"/>
    <property type="match status" value="1"/>
</dbReference>
<dbReference type="HAMAP" id="MF_00037">
    <property type="entry name" value="MurB"/>
    <property type="match status" value="1"/>
</dbReference>
<dbReference type="InterPro" id="IPR016166">
    <property type="entry name" value="FAD-bd_PCMH"/>
</dbReference>
<dbReference type="InterPro" id="IPR036318">
    <property type="entry name" value="FAD-bd_PCMH-like_sf"/>
</dbReference>
<dbReference type="InterPro" id="IPR016167">
    <property type="entry name" value="FAD-bd_PCMH_sub1"/>
</dbReference>
<dbReference type="InterPro" id="IPR016169">
    <property type="entry name" value="FAD-bd_PCMH_sub2"/>
</dbReference>
<dbReference type="InterPro" id="IPR003170">
    <property type="entry name" value="MurB"/>
</dbReference>
<dbReference type="InterPro" id="IPR011601">
    <property type="entry name" value="MurB_C"/>
</dbReference>
<dbReference type="InterPro" id="IPR036635">
    <property type="entry name" value="MurB_C_sf"/>
</dbReference>
<dbReference type="InterPro" id="IPR006094">
    <property type="entry name" value="Oxid_FAD_bind_N"/>
</dbReference>
<dbReference type="NCBIfam" id="TIGR00179">
    <property type="entry name" value="murB"/>
    <property type="match status" value="1"/>
</dbReference>
<dbReference type="NCBIfam" id="NF010480">
    <property type="entry name" value="PRK13905.1"/>
    <property type="match status" value="1"/>
</dbReference>
<dbReference type="PANTHER" id="PTHR21071">
    <property type="entry name" value="UDP-N-ACETYLENOLPYRUVOYLGLUCOSAMINE REDUCTASE"/>
    <property type="match status" value="1"/>
</dbReference>
<dbReference type="PANTHER" id="PTHR21071:SF4">
    <property type="entry name" value="UDP-N-ACETYLENOLPYRUVOYLGLUCOSAMINE REDUCTASE"/>
    <property type="match status" value="1"/>
</dbReference>
<dbReference type="Pfam" id="PF01565">
    <property type="entry name" value="FAD_binding_4"/>
    <property type="match status" value="1"/>
</dbReference>
<dbReference type="Pfam" id="PF02873">
    <property type="entry name" value="MurB_C"/>
    <property type="match status" value="1"/>
</dbReference>
<dbReference type="SUPFAM" id="SSF56176">
    <property type="entry name" value="FAD-binding/transporter-associated domain-like"/>
    <property type="match status" value="1"/>
</dbReference>
<dbReference type="SUPFAM" id="SSF56194">
    <property type="entry name" value="Uridine diphospho-N-Acetylenolpyruvylglucosamine reductase, MurB, C-terminal domain"/>
    <property type="match status" value="1"/>
</dbReference>
<dbReference type="PROSITE" id="PS51387">
    <property type="entry name" value="FAD_PCMH"/>
    <property type="match status" value="1"/>
</dbReference>
<feature type="chain" id="PRO_1000071041" description="UDP-N-acetylenolpyruvoylglucosamine reductase">
    <location>
        <begin position="1"/>
        <end position="310"/>
    </location>
</feature>
<feature type="domain" description="FAD-binding PCMH-type" evidence="1">
    <location>
        <begin position="34"/>
        <end position="213"/>
    </location>
</feature>
<feature type="active site" evidence="1">
    <location>
        <position position="178"/>
    </location>
</feature>
<feature type="active site" description="Proton donor" evidence="1">
    <location>
        <position position="227"/>
    </location>
</feature>
<feature type="active site" evidence="1">
    <location>
        <position position="297"/>
    </location>
</feature>
<reference key="1">
    <citation type="journal article" date="2011" name="Stand. Genomic Sci.">
        <title>Complete genome sequence of Parvibaculum lavamentivorans type strain (DS-1(T)).</title>
        <authorList>
            <person name="Schleheck D."/>
            <person name="Weiss M."/>
            <person name="Pitluck S."/>
            <person name="Bruce D."/>
            <person name="Land M.L."/>
            <person name="Han S."/>
            <person name="Saunders E."/>
            <person name="Tapia R."/>
            <person name="Detter C."/>
            <person name="Brettin T."/>
            <person name="Han J."/>
            <person name="Woyke T."/>
            <person name="Goodwin L."/>
            <person name="Pennacchio L."/>
            <person name="Nolan M."/>
            <person name="Cook A.M."/>
            <person name="Kjelleberg S."/>
            <person name="Thomas T."/>
        </authorList>
    </citation>
    <scope>NUCLEOTIDE SEQUENCE [LARGE SCALE GENOMIC DNA]</scope>
    <source>
        <strain>DS-1 / DSM 13023 / NCIMB 13966</strain>
    </source>
</reference>
<proteinExistence type="inferred from homology"/>
<evidence type="ECO:0000255" key="1">
    <source>
        <dbReference type="HAMAP-Rule" id="MF_00037"/>
    </source>
</evidence>
<keyword id="KW-0131">Cell cycle</keyword>
<keyword id="KW-0132">Cell division</keyword>
<keyword id="KW-0133">Cell shape</keyword>
<keyword id="KW-0961">Cell wall biogenesis/degradation</keyword>
<keyword id="KW-0963">Cytoplasm</keyword>
<keyword id="KW-0274">FAD</keyword>
<keyword id="KW-0285">Flavoprotein</keyword>
<keyword id="KW-0521">NADP</keyword>
<keyword id="KW-0560">Oxidoreductase</keyword>
<keyword id="KW-0573">Peptidoglycan synthesis</keyword>
<keyword id="KW-1185">Reference proteome</keyword>
<gene>
    <name evidence="1" type="primary">murB</name>
    <name type="ordered locus">Plav_2423</name>
</gene>
<protein>
    <recommendedName>
        <fullName evidence="1">UDP-N-acetylenolpyruvoylglucosamine reductase</fullName>
        <ecNumber evidence="1">1.3.1.98</ecNumber>
    </recommendedName>
    <alternativeName>
        <fullName evidence="1">UDP-N-acetylmuramate dehydrogenase</fullName>
    </alternativeName>
</protein>
<accession>A7HVU9</accession>
<organism>
    <name type="scientific">Parvibaculum lavamentivorans (strain DS-1 / DSM 13023 / NCIMB 13966)</name>
    <dbReference type="NCBI Taxonomy" id="402881"/>
    <lineage>
        <taxon>Bacteria</taxon>
        <taxon>Pseudomonadati</taxon>
        <taxon>Pseudomonadota</taxon>
        <taxon>Alphaproteobacteria</taxon>
        <taxon>Hyphomicrobiales</taxon>
        <taxon>Parvibaculaceae</taxon>
        <taxon>Parvibaculum</taxon>
    </lineage>
</organism>
<name>MURB_PARL1</name>
<comment type="function">
    <text evidence="1">Cell wall formation.</text>
</comment>
<comment type="catalytic activity">
    <reaction evidence="1">
        <text>UDP-N-acetyl-alpha-D-muramate + NADP(+) = UDP-N-acetyl-3-O-(1-carboxyvinyl)-alpha-D-glucosamine + NADPH + H(+)</text>
        <dbReference type="Rhea" id="RHEA:12248"/>
        <dbReference type="ChEBI" id="CHEBI:15378"/>
        <dbReference type="ChEBI" id="CHEBI:57783"/>
        <dbReference type="ChEBI" id="CHEBI:58349"/>
        <dbReference type="ChEBI" id="CHEBI:68483"/>
        <dbReference type="ChEBI" id="CHEBI:70757"/>
        <dbReference type="EC" id="1.3.1.98"/>
    </reaction>
</comment>
<comment type="cofactor">
    <cofactor evidence="1">
        <name>FAD</name>
        <dbReference type="ChEBI" id="CHEBI:57692"/>
    </cofactor>
</comment>
<comment type="pathway">
    <text evidence="1">Cell wall biogenesis; peptidoglycan biosynthesis.</text>
</comment>
<comment type="subcellular location">
    <subcellularLocation>
        <location evidence="1">Cytoplasm</location>
    </subcellularLocation>
</comment>
<comment type="similarity">
    <text evidence="1">Belongs to the MurB family.</text>
</comment>